<accession>Q08E00</accession>
<dbReference type="EC" id="3.6.5.2" evidence="2"/>
<dbReference type="EMBL" id="BC123490">
    <property type="protein sequence ID" value="AAI23491.1"/>
    <property type="molecule type" value="mRNA"/>
</dbReference>
<dbReference type="RefSeq" id="NP_001070401.1">
    <property type="nucleotide sequence ID" value="NM_001076933.1"/>
</dbReference>
<dbReference type="SMR" id="Q08E00"/>
<dbReference type="FunCoup" id="Q08E00">
    <property type="interactions" value="252"/>
</dbReference>
<dbReference type="STRING" id="9913.ENSBTAP00000021899"/>
<dbReference type="PaxDb" id="9913-ENSBTAP00000021899"/>
<dbReference type="Ensembl" id="ENSBTAT00000021899.6">
    <property type="protein sequence ID" value="ENSBTAP00000021899.6"/>
    <property type="gene ID" value="ENSBTAG00000000062.7"/>
</dbReference>
<dbReference type="GeneID" id="614252"/>
<dbReference type="KEGG" id="bta:614252"/>
<dbReference type="CTD" id="51285"/>
<dbReference type="VEuPathDB" id="HostDB:ENSBTAG00000000062"/>
<dbReference type="VGNC" id="VGNC:33756">
    <property type="gene designation" value="RASL12"/>
</dbReference>
<dbReference type="eggNOG" id="KOG0395">
    <property type="taxonomic scope" value="Eukaryota"/>
</dbReference>
<dbReference type="GeneTree" id="ENSGT00940000160167"/>
<dbReference type="InParanoid" id="Q08E00"/>
<dbReference type="OMA" id="VYSIDNM"/>
<dbReference type="OrthoDB" id="18798at2759"/>
<dbReference type="Proteomes" id="UP000009136">
    <property type="component" value="Chromosome 10"/>
</dbReference>
<dbReference type="Bgee" id="ENSBTAG00000000062">
    <property type="expression patterns" value="Expressed in trachea and 99 other cell types or tissues"/>
</dbReference>
<dbReference type="GO" id="GO:0005886">
    <property type="term" value="C:plasma membrane"/>
    <property type="evidence" value="ECO:0000318"/>
    <property type="project" value="GO_Central"/>
</dbReference>
<dbReference type="GO" id="GO:0003925">
    <property type="term" value="F:G protein activity"/>
    <property type="evidence" value="ECO:0007669"/>
    <property type="project" value="UniProtKB-EC"/>
</dbReference>
<dbReference type="GO" id="GO:0019003">
    <property type="term" value="F:GDP binding"/>
    <property type="evidence" value="ECO:0000318"/>
    <property type="project" value="GO_Central"/>
</dbReference>
<dbReference type="GO" id="GO:0005525">
    <property type="term" value="F:GTP binding"/>
    <property type="evidence" value="ECO:0000318"/>
    <property type="project" value="GO_Central"/>
</dbReference>
<dbReference type="GO" id="GO:0003924">
    <property type="term" value="F:GTPase activity"/>
    <property type="evidence" value="ECO:0000318"/>
    <property type="project" value="GO_Central"/>
</dbReference>
<dbReference type="CDD" id="cd04146">
    <property type="entry name" value="RERG_RasL11_like"/>
    <property type="match status" value="1"/>
</dbReference>
<dbReference type="FunFam" id="3.40.50.300:FF:001016">
    <property type="entry name" value="ras-like protein family member 12"/>
    <property type="match status" value="1"/>
</dbReference>
<dbReference type="Gene3D" id="3.40.50.300">
    <property type="entry name" value="P-loop containing nucleotide triphosphate hydrolases"/>
    <property type="match status" value="1"/>
</dbReference>
<dbReference type="InterPro" id="IPR027417">
    <property type="entry name" value="P-loop_NTPase"/>
</dbReference>
<dbReference type="InterPro" id="IPR051065">
    <property type="entry name" value="Ras-related_GTPase"/>
</dbReference>
<dbReference type="InterPro" id="IPR005225">
    <property type="entry name" value="Small_GTP-bd"/>
</dbReference>
<dbReference type="InterPro" id="IPR001806">
    <property type="entry name" value="Small_GTPase"/>
</dbReference>
<dbReference type="NCBIfam" id="TIGR00231">
    <property type="entry name" value="small_GTP"/>
    <property type="match status" value="1"/>
</dbReference>
<dbReference type="PANTHER" id="PTHR45704">
    <property type="entry name" value="RAS-LIKE FAMILY MEMBER 11"/>
    <property type="match status" value="1"/>
</dbReference>
<dbReference type="Pfam" id="PF00071">
    <property type="entry name" value="Ras"/>
    <property type="match status" value="1"/>
</dbReference>
<dbReference type="PRINTS" id="PR00449">
    <property type="entry name" value="RASTRNSFRMNG"/>
</dbReference>
<dbReference type="SMART" id="SM00175">
    <property type="entry name" value="RAB"/>
    <property type="match status" value="1"/>
</dbReference>
<dbReference type="SMART" id="SM00173">
    <property type="entry name" value="RAS"/>
    <property type="match status" value="1"/>
</dbReference>
<dbReference type="SMART" id="SM00174">
    <property type="entry name" value="RHO"/>
    <property type="match status" value="1"/>
</dbReference>
<dbReference type="SUPFAM" id="SSF52540">
    <property type="entry name" value="P-loop containing nucleoside triphosphate hydrolases"/>
    <property type="match status" value="1"/>
</dbReference>
<dbReference type="PROSITE" id="PS51421">
    <property type="entry name" value="RAS"/>
    <property type="match status" value="1"/>
</dbReference>
<proteinExistence type="evidence at transcript level"/>
<name>RASLC_BOVIN</name>
<sequence>MASVFGKPRAGGGQQSAPLEVNLAILGRRGAGKSALTVKFLTRRFISEYDPNLEDTYSSEETVDHQPVHLRVMDTADLDTPRNCERYLNWAHAFLVVYSVDSRQSFEGSSSYLELLALHAKETQRSFPALLLGNKLDMAQYRQVTQAEGAALAGRFGCLFFEVSACLDFEHVQHVFHEAVREARRELEKNSLARPLFISEERAVHHQAPLTARHGLASCTFNTLSTTSLKEMPAVAQAKLVTVKSSRAQSKRKAPTLTLLKGFKIF</sequence>
<feature type="chain" id="PRO_0000333867" description="Ras-like protein family member 12">
    <location>
        <begin position="1"/>
        <end position="266"/>
    </location>
</feature>
<feature type="binding site" evidence="1">
    <location>
        <begin position="27"/>
        <end position="34"/>
    </location>
    <ligand>
        <name>GTP</name>
        <dbReference type="ChEBI" id="CHEBI:37565"/>
    </ligand>
</feature>
<feature type="binding site" evidence="1">
    <location>
        <begin position="74"/>
        <end position="78"/>
    </location>
    <ligand>
        <name>GTP</name>
        <dbReference type="ChEBI" id="CHEBI:37565"/>
    </ligand>
</feature>
<feature type="binding site" evidence="1">
    <location>
        <begin position="134"/>
        <end position="137"/>
    </location>
    <ligand>
        <name>GTP</name>
        <dbReference type="ChEBI" id="CHEBI:37565"/>
    </ligand>
</feature>
<reference key="1">
    <citation type="submission" date="2006-09" db="EMBL/GenBank/DDBJ databases">
        <authorList>
            <consortium name="NIH - Mammalian Gene Collection (MGC) project"/>
        </authorList>
    </citation>
    <scope>NUCLEOTIDE SEQUENCE [LARGE SCALE MRNA]</scope>
    <source>
        <strain>Hereford</strain>
        <tissue>Basal ganglia</tissue>
    </source>
</reference>
<evidence type="ECO:0000250" key="1"/>
<evidence type="ECO:0000250" key="2">
    <source>
        <dbReference type="UniProtKB" id="P01116"/>
    </source>
</evidence>
<evidence type="ECO:0000305" key="3"/>
<gene>
    <name type="primary">RASL12</name>
</gene>
<protein>
    <recommendedName>
        <fullName>Ras-like protein family member 12</fullName>
        <ecNumber evidence="2">3.6.5.2</ecNumber>
    </recommendedName>
</protein>
<comment type="catalytic activity">
    <reaction evidence="2">
        <text>GTP + H2O = GDP + phosphate + H(+)</text>
        <dbReference type="Rhea" id="RHEA:19669"/>
        <dbReference type="ChEBI" id="CHEBI:15377"/>
        <dbReference type="ChEBI" id="CHEBI:15378"/>
        <dbReference type="ChEBI" id="CHEBI:37565"/>
        <dbReference type="ChEBI" id="CHEBI:43474"/>
        <dbReference type="ChEBI" id="CHEBI:58189"/>
        <dbReference type="EC" id="3.6.5.2"/>
    </reaction>
</comment>
<comment type="similarity">
    <text evidence="3">Belongs to the small GTPase superfamily. Ras family.</text>
</comment>
<keyword id="KW-0342">GTP-binding</keyword>
<keyword id="KW-0378">Hydrolase</keyword>
<keyword id="KW-0547">Nucleotide-binding</keyword>
<keyword id="KW-1185">Reference proteome</keyword>
<organism>
    <name type="scientific">Bos taurus</name>
    <name type="common">Bovine</name>
    <dbReference type="NCBI Taxonomy" id="9913"/>
    <lineage>
        <taxon>Eukaryota</taxon>
        <taxon>Metazoa</taxon>
        <taxon>Chordata</taxon>
        <taxon>Craniata</taxon>
        <taxon>Vertebrata</taxon>
        <taxon>Euteleostomi</taxon>
        <taxon>Mammalia</taxon>
        <taxon>Eutheria</taxon>
        <taxon>Laurasiatheria</taxon>
        <taxon>Artiodactyla</taxon>
        <taxon>Ruminantia</taxon>
        <taxon>Pecora</taxon>
        <taxon>Bovidae</taxon>
        <taxon>Bovinae</taxon>
        <taxon>Bos</taxon>
    </lineage>
</organism>